<organism>
    <name type="scientific">Hordeum vulgare</name>
    <name type="common">Barley</name>
    <dbReference type="NCBI Taxonomy" id="4513"/>
    <lineage>
        <taxon>Eukaryota</taxon>
        <taxon>Viridiplantae</taxon>
        <taxon>Streptophyta</taxon>
        <taxon>Embryophyta</taxon>
        <taxon>Tracheophyta</taxon>
        <taxon>Spermatophyta</taxon>
        <taxon>Magnoliopsida</taxon>
        <taxon>Liliopsida</taxon>
        <taxon>Poales</taxon>
        <taxon>Poaceae</taxon>
        <taxon>BOP clade</taxon>
        <taxon>Pooideae</taxon>
        <taxon>Triticodae</taxon>
        <taxon>Triticeae</taxon>
        <taxon>Hordeinae</taxon>
        <taxon>Hordeum</taxon>
    </lineage>
</organism>
<gene>
    <name evidence="1" type="primary">rpl33</name>
</gene>
<sequence>MAKGKDVRIRVILECISCVRKGANEESTGISRYSTQKNRHNTPGQLEFKKFCRYCRKHTTHHEIKK</sequence>
<geneLocation type="chloroplast"/>
<dbReference type="EMBL" id="EF115541">
    <property type="protein sequence ID" value="ABK79433.1"/>
    <property type="molecule type" value="Genomic_DNA"/>
</dbReference>
<dbReference type="RefSeq" id="YP_010144445.1">
    <property type="nucleotide sequence ID" value="NC_056985.1"/>
</dbReference>
<dbReference type="RefSeq" id="YP_874673.1">
    <property type="nucleotide sequence ID" value="NC_008590.1"/>
</dbReference>
<dbReference type="GeneID" id="4525070"/>
<dbReference type="GeneID" id="67140649"/>
<dbReference type="GO" id="GO:0009507">
    <property type="term" value="C:chloroplast"/>
    <property type="evidence" value="ECO:0007669"/>
    <property type="project" value="UniProtKB-SubCell"/>
</dbReference>
<dbReference type="GO" id="GO:1990904">
    <property type="term" value="C:ribonucleoprotein complex"/>
    <property type="evidence" value="ECO:0007669"/>
    <property type="project" value="UniProtKB-KW"/>
</dbReference>
<dbReference type="GO" id="GO:0005840">
    <property type="term" value="C:ribosome"/>
    <property type="evidence" value="ECO:0007669"/>
    <property type="project" value="UniProtKB-KW"/>
</dbReference>
<dbReference type="GO" id="GO:0003735">
    <property type="term" value="F:structural constituent of ribosome"/>
    <property type="evidence" value="ECO:0007669"/>
    <property type="project" value="InterPro"/>
</dbReference>
<dbReference type="GO" id="GO:0006412">
    <property type="term" value="P:translation"/>
    <property type="evidence" value="ECO:0007669"/>
    <property type="project" value="UniProtKB-UniRule"/>
</dbReference>
<dbReference type="Gene3D" id="2.20.28.120">
    <property type="entry name" value="Ribosomal protein L33"/>
    <property type="match status" value="1"/>
</dbReference>
<dbReference type="HAMAP" id="MF_00294">
    <property type="entry name" value="Ribosomal_bL33"/>
    <property type="match status" value="1"/>
</dbReference>
<dbReference type="InterPro" id="IPR001705">
    <property type="entry name" value="Ribosomal_bL33"/>
</dbReference>
<dbReference type="InterPro" id="IPR018264">
    <property type="entry name" value="Ribosomal_bL33_CS"/>
</dbReference>
<dbReference type="InterPro" id="IPR038584">
    <property type="entry name" value="Ribosomal_bL33_sf"/>
</dbReference>
<dbReference type="InterPro" id="IPR011332">
    <property type="entry name" value="Ribosomal_zn-bd"/>
</dbReference>
<dbReference type="NCBIfam" id="NF001764">
    <property type="entry name" value="PRK00504.1"/>
    <property type="match status" value="1"/>
</dbReference>
<dbReference type="NCBIfam" id="NF001860">
    <property type="entry name" value="PRK00595.1"/>
    <property type="match status" value="1"/>
</dbReference>
<dbReference type="NCBIfam" id="TIGR01023">
    <property type="entry name" value="rpmG_bact"/>
    <property type="match status" value="1"/>
</dbReference>
<dbReference type="PANTHER" id="PTHR43168">
    <property type="entry name" value="50S RIBOSOMAL PROTEIN L33, CHLOROPLASTIC"/>
    <property type="match status" value="1"/>
</dbReference>
<dbReference type="PANTHER" id="PTHR43168:SF2">
    <property type="entry name" value="LARGE RIBOSOMAL SUBUNIT PROTEIN BL33C"/>
    <property type="match status" value="1"/>
</dbReference>
<dbReference type="Pfam" id="PF00471">
    <property type="entry name" value="Ribosomal_L33"/>
    <property type="match status" value="1"/>
</dbReference>
<dbReference type="SUPFAM" id="SSF57829">
    <property type="entry name" value="Zn-binding ribosomal proteins"/>
    <property type="match status" value="1"/>
</dbReference>
<dbReference type="PROSITE" id="PS00582">
    <property type="entry name" value="RIBOSOMAL_L33"/>
    <property type="match status" value="1"/>
</dbReference>
<keyword id="KW-0150">Chloroplast</keyword>
<keyword id="KW-0934">Plastid</keyword>
<keyword id="KW-0687">Ribonucleoprotein</keyword>
<keyword id="KW-0689">Ribosomal protein</keyword>
<protein>
    <recommendedName>
        <fullName evidence="1">Large ribosomal subunit protein bL33c</fullName>
    </recommendedName>
    <alternativeName>
        <fullName evidence="2">50S ribosomal protein L33, chloroplastic</fullName>
    </alternativeName>
</protein>
<reference key="1">
    <citation type="journal article" date="2007" name="Theor. Appl. Genet.">
        <title>Complete chloroplast genome sequences of Hordeum vulgare, Sorghum bicolor and Agrostis stolonifera, and comparative analyses with other grass genomes.</title>
        <authorList>
            <person name="Saski C."/>
            <person name="Lee S.-B."/>
            <person name="Fjellheim S."/>
            <person name="Guda C."/>
            <person name="Jansen R.K."/>
            <person name="Luo H."/>
            <person name="Tomkins J."/>
            <person name="Rognli O.A."/>
            <person name="Daniell H."/>
            <person name="Clarke J.L."/>
        </authorList>
    </citation>
    <scope>NUCLEOTIDE SEQUENCE [LARGE SCALE GENOMIC DNA]</scope>
    <source>
        <strain>cv. Morex</strain>
    </source>
</reference>
<name>RK33_HORVU</name>
<comment type="subcellular location">
    <subcellularLocation>
        <location>Plastid</location>
        <location>Chloroplast</location>
    </subcellularLocation>
</comment>
<comment type="similarity">
    <text evidence="1">Belongs to the bacterial ribosomal protein bL33 family.</text>
</comment>
<feature type="chain" id="PRO_0000356806" description="Large ribosomal subunit protein bL33c">
    <location>
        <begin position="1"/>
        <end position="66"/>
    </location>
</feature>
<proteinExistence type="inferred from homology"/>
<accession>A1E9L1</accession>
<evidence type="ECO:0000255" key="1">
    <source>
        <dbReference type="HAMAP-Rule" id="MF_00294"/>
    </source>
</evidence>
<evidence type="ECO:0000305" key="2"/>